<accession>B2K755</accession>
<feature type="chain" id="PRO_1000139079" description="Acyl carrier protein">
    <location>
        <begin position="1"/>
        <end position="78"/>
    </location>
</feature>
<feature type="domain" description="Carrier" evidence="2">
    <location>
        <begin position="2"/>
        <end position="77"/>
    </location>
</feature>
<feature type="modified residue" description="O-(pantetheine 4'-phosphoryl)serine" evidence="2">
    <location>
        <position position="37"/>
    </location>
</feature>
<name>ACP_YERPB</name>
<protein>
    <recommendedName>
        <fullName evidence="1">Acyl carrier protein</fullName>
        <shortName evidence="1">ACP</shortName>
    </recommendedName>
</protein>
<dbReference type="EMBL" id="CP001048">
    <property type="protein sequence ID" value="ACC89518.1"/>
    <property type="molecule type" value="Genomic_DNA"/>
</dbReference>
<dbReference type="RefSeq" id="WP_002220787.1">
    <property type="nucleotide sequence ID" value="NZ_CP009780.1"/>
</dbReference>
<dbReference type="SMR" id="B2K755"/>
<dbReference type="GeneID" id="97455792"/>
<dbReference type="KEGG" id="ypb:YPTS_2558"/>
<dbReference type="PATRIC" id="fig|502801.10.peg.1969"/>
<dbReference type="UniPathway" id="UPA00094"/>
<dbReference type="GO" id="GO:0005829">
    <property type="term" value="C:cytosol"/>
    <property type="evidence" value="ECO:0007669"/>
    <property type="project" value="TreeGrafter"/>
</dbReference>
<dbReference type="GO" id="GO:0016020">
    <property type="term" value="C:membrane"/>
    <property type="evidence" value="ECO:0007669"/>
    <property type="project" value="GOC"/>
</dbReference>
<dbReference type="GO" id="GO:0000035">
    <property type="term" value="F:acyl binding"/>
    <property type="evidence" value="ECO:0007669"/>
    <property type="project" value="TreeGrafter"/>
</dbReference>
<dbReference type="GO" id="GO:0000036">
    <property type="term" value="F:acyl carrier activity"/>
    <property type="evidence" value="ECO:0007669"/>
    <property type="project" value="UniProtKB-UniRule"/>
</dbReference>
<dbReference type="GO" id="GO:0009245">
    <property type="term" value="P:lipid A biosynthetic process"/>
    <property type="evidence" value="ECO:0007669"/>
    <property type="project" value="TreeGrafter"/>
</dbReference>
<dbReference type="FunFam" id="1.10.1200.10:FF:000001">
    <property type="entry name" value="Acyl carrier protein"/>
    <property type="match status" value="1"/>
</dbReference>
<dbReference type="Gene3D" id="1.10.1200.10">
    <property type="entry name" value="ACP-like"/>
    <property type="match status" value="1"/>
</dbReference>
<dbReference type="HAMAP" id="MF_01217">
    <property type="entry name" value="Acyl_carrier"/>
    <property type="match status" value="1"/>
</dbReference>
<dbReference type="InterPro" id="IPR003231">
    <property type="entry name" value="ACP"/>
</dbReference>
<dbReference type="InterPro" id="IPR036736">
    <property type="entry name" value="ACP-like_sf"/>
</dbReference>
<dbReference type="InterPro" id="IPR009081">
    <property type="entry name" value="PP-bd_ACP"/>
</dbReference>
<dbReference type="InterPro" id="IPR006162">
    <property type="entry name" value="Ppantetheine_attach_site"/>
</dbReference>
<dbReference type="NCBIfam" id="TIGR00517">
    <property type="entry name" value="acyl_carrier"/>
    <property type="match status" value="1"/>
</dbReference>
<dbReference type="NCBIfam" id="NF002148">
    <property type="entry name" value="PRK00982.1-2"/>
    <property type="match status" value="1"/>
</dbReference>
<dbReference type="NCBIfam" id="NF002149">
    <property type="entry name" value="PRK00982.1-3"/>
    <property type="match status" value="1"/>
</dbReference>
<dbReference type="NCBIfam" id="NF002150">
    <property type="entry name" value="PRK00982.1-4"/>
    <property type="match status" value="1"/>
</dbReference>
<dbReference type="NCBIfam" id="NF002151">
    <property type="entry name" value="PRK00982.1-5"/>
    <property type="match status" value="1"/>
</dbReference>
<dbReference type="PANTHER" id="PTHR20863">
    <property type="entry name" value="ACYL CARRIER PROTEIN"/>
    <property type="match status" value="1"/>
</dbReference>
<dbReference type="PANTHER" id="PTHR20863:SF76">
    <property type="entry name" value="CARRIER DOMAIN-CONTAINING PROTEIN"/>
    <property type="match status" value="1"/>
</dbReference>
<dbReference type="Pfam" id="PF00550">
    <property type="entry name" value="PP-binding"/>
    <property type="match status" value="1"/>
</dbReference>
<dbReference type="SUPFAM" id="SSF47336">
    <property type="entry name" value="ACP-like"/>
    <property type="match status" value="1"/>
</dbReference>
<dbReference type="PROSITE" id="PS50075">
    <property type="entry name" value="CARRIER"/>
    <property type="match status" value="1"/>
</dbReference>
<dbReference type="PROSITE" id="PS00012">
    <property type="entry name" value="PHOSPHOPANTETHEINE"/>
    <property type="match status" value="1"/>
</dbReference>
<gene>
    <name evidence="1" type="primary">acpP</name>
    <name type="ordered locus">YPTS_2558</name>
</gene>
<evidence type="ECO:0000255" key="1">
    <source>
        <dbReference type="HAMAP-Rule" id="MF_01217"/>
    </source>
</evidence>
<evidence type="ECO:0000255" key="2">
    <source>
        <dbReference type="PROSITE-ProRule" id="PRU00258"/>
    </source>
</evidence>
<reference key="1">
    <citation type="submission" date="2008-04" db="EMBL/GenBank/DDBJ databases">
        <title>Complete sequence of Yersinia pseudotuberculosis PB1/+.</title>
        <authorList>
            <person name="Copeland A."/>
            <person name="Lucas S."/>
            <person name="Lapidus A."/>
            <person name="Glavina del Rio T."/>
            <person name="Dalin E."/>
            <person name="Tice H."/>
            <person name="Bruce D."/>
            <person name="Goodwin L."/>
            <person name="Pitluck S."/>
            <person name="Munk A.C."/>
            <person name="Brettin T."/>
            <person name="Detter J.C."/>
            <person name="Han C."/>
            <person name="Tapia R."/>
            <person name="Schmutz J."/>
            <person name="Larimer F."/>
            <person name="Land M."/>
            <person name="Hauser L."/>
            <person name="Challacombe J.F."/>
            <person name="Green L."/>
            <person name="Lindler L.E."/>
            <person name="Nikolich M.P."/>
            <person name="Richardson P."/>
        </authorList>
    </citation>
    <scope>NUCLEOTIDE SEQUENCE [LARGE SCALE GENOMIC DNA]</scope>
    <source>
        <strain>PB1/+</strain>
    </source>
</reference>
<organism>
    <name type="scientific">Yersinia pseudotuberculosis serotype IB (strain PB1/+)</name>
    <dbReference type="NCBI Taxonomy" id="502801"/>
    <lineage>
        <taxon>Bacteria</taxon>
        <taxon>Pseudomonadati</taxon>
        <taxon>Pseudomonadota</taxon>
        <taxon>Gammaproteobacteria</taxon>
        <taxon>Enterobacterales</taxon>
        <taxon>Yersiniaceae</taxon>
        <taxon>Yersinia</taxon>
    </lineage>
</organism>
<proteinExistence type="inferred from homology"/>
<sequence>MSTIEERVKKIIVEQLGVKEDEVKNSASFVEDLGADSLDTVELVMALEEEFDTEIPDEEAEKITTVQAAIDFINANQQ</sequence>
<comment type="function">
    <text evidence="1">Carrier of the growing fatty acid chain in fatty acid biosynthesis.</text>
</comment>
<comment type="pathway">
    <text evidence="1">Lipid metabolism; fatty acid biosynthesis.</text>
</comment>
<comment type="subcellular location">
    <subcellularLocation>
        <location evidence="1">Cytoplasm</location>
    </subcellularLocation>
</comment>
<comment type="PTM">
    <text evidence="1">4'-phosphopantetheine is transferred from CoA to a specific serine of apo-ACP by AcpS. This modification is essential for activity because fatty acids are bound in thioester linkage to the sulfhydryl of the prosthetic group.</text>
</comment>
<comment type="similarity">
    <text evidence="1">Belongs to the acyl carrier protein (ACP) family.</text>
</comment>
<keyword id="KW-0963">Cytoplasm</keyword>
<keyword id="KW-0275">Fatty acid biosynthesis</keyword>
<keyword id="KW-0276">Fatty acid metabolism</keyword>
<keyword id="KW-0444">Lipid biosynthesis</keyword>
<keyword id="KW-0443">Lipid metabolism</keyword>
<keyword id="KW-0596">Phosphopantetheine</keyword>
<keyword id="KW-0597">Phosphoprotein</keyword>